<gene>
    <name evidence="6 8" type="primary">ZBTB11</name>
</gene>
<name>ZBT11_HUMAN</name>
<reference key="1">
    <citation type="submission" date="1996-09" db="EMBL/GenBank/DDBJ databases">
        <authorList>
            <person name="Tang C.M."/>
            <person name="Seto E."/>
        </authorList>
    </citation>
    <scope>NUCLEOTIDE SEQUENCE [MRNA]</scope>
</reference>
<reference key="2">
    <citation type="journal article" date="2004" name="Nat. Genet.">
        <title>Complete sequencing and characterization of 21,243 full-length human cDNAs.</title>
        <authorList>
            <person name="Ota T."/>
            <person name="Suzuki Y."/>
            <person name="Nishikawa T."/>
            <person name="Otsuki T."/>
            <person name="Sugiyama T."/>
            <person name="Irie R."/>
            <person name="Wakamatsu A."/>
            <person name="Hayashi K."/>
            <person name="Sato H."/>
            <person name="Nagai K."/>
            <person name="Kimura K."/>
            <person name="Makita H."/>
            <person name="Sekine M."/>
            <person name="Obayashi M."/>
            <person name="Nishi T."/>
            <person name="Shibahara T."/>
            <person name="Tanaka T."/>
            <person name="Ishii S."/>
            <person name="Yamamoto J."/>
            <person name="Saito K."/>
            <person name="Kawai Y."/>
            <person name="Isono Y."/>
            <person name="Nakamura Y."/>
            <person name="Nagahari K."/>
            <person name="Murakami K."/>
            <person name="Yasuda T."/>
            <person name="Iwayanagi T."/>
            <person name="Wagatsuma M."/>
            <person name="Shiratori A."/>
            <person name="Sudo H."/>
            <person name="Hosoiri T."/>
            <person name="Kaku Y."/>
            <person name="Kodaira H."/>
            <person name="Kondo H."/>
            <person name="Sugawara M."/>
            <person name="Takahashi M."/>
            <person name="Kanda K."/>
            <person name="Yokoi T."/>
            <person name="Furuya T."/>
            <person name="Kikkawa E."/>
            <person name="Omura Y."/>
            <person name="Abe K."/>
            <person name="Kamihara K."/>
            <person name="Katsuta N."/>
            <person name="Sato K."/>
            <person name="Tanikawa M."/>
            <person name="Yamazaki M."/>
            <person name="Ninomiya K."/>
            <person name="Ishibashi T."/>
            <person name="Yamashita H."/>
            <person name="Murakawa K."/>
            <person name="Fujimori K."/>
            <person name="Tanai H."/>
            <person name="Kimata M."/>
            <person name="Watanabe M."/>
            <person name="Hiraoka S."/>
            <person name="Chiba Y."/>
            <person name="Ishida S."/>
            <person name="Ono Y."/>
            <person name="Takiguchi S."/>
            <person name="Watanabe S."/>
            <person name="Yosida M."/>
            <person name="Hotuta T."/>
            <person name="Kusano J."/>
            <person name="Kanehori K."/>
            <person name="Takahashi-Fujii A."/>
            <person name="Hara H."/>
            <person name="Tanase T.-O."/>
            <person name="Nomura Y."/>
            <person name="Togiya S."/>
            <person name="Komai F."/>
            <person name="Hara R."/>
            <person name="Takeuchi K."/>
            <person name="Arita M."/>
            <person name="Imose N."/>
            <person name="Musashino K."/>
            <person name="Yuuki H."/>
            <person name="Oshima A."/>
            <person name="Sasaki N."/>
            <person name="Aotsuka S."/>
            <person name="Yoshikawa Y."/>
            <person name="Matsunawa H."/>
            <person name="Ichihara T."/>
            <person name="Shiohata N."/>
            <person name="Sano S."/>
            <person name="Moriya S."/>
            <person name="Momiyama H."/>
            <person name="Satoh N."/>
            <person name="Takami S."/>
            <person name="Terashima Y."/>
            <person name="Suzuki O."/>
            <person name="Nakagawa S."/>
            <person name="Senoh A."/>
            <person name="Mizoguchi H."/>
            <person name="Goto Y."/>
            <person name="Shimizu F."/>
            <person name="Wakebe H."/>
            <person name="Hishigaki H."/>
            <person name="Watanabe T."/>
            <person name="Sugiyama A."/>
            <person name="Takemoto M."/>
            <person name="Kawakami B."/>
            <person name="Yamazaki M."/>
            <person name="Watanabe K."/>
            <person name="Kumagai A."/>
            <person name="Itakura S."/>
            <person name="Fukuzumi Y."/>
            <person name="Fujimori Y."/>
            <person name="Komiyama M."/>
            <person name="Tashiro H."/>
            <person name="Tanigami A."/>
            <person name="Fujiwara T."/>
            <person name="Ono T."/>
            <person name="Yamada K."/>
            <person name="Fujii Y."/>
            <person name="Ozaki K."/>
            <person name="Hirao M."/>
            <person name="Ohmori Y."/>
            <person name="Kawabata A."/>
            <person name="Hikiji T."/>
            <person name="Kobatake N."/>
            <person name="Inagaki H."/>
            <person name="Ikema Y."/>
            <person name="Okamoto S."/>
            <person name="Okitani R."/>
            <person name="Kawakami T."/>
            <person name="Noguchi S."/>
            <person name="Itoh T."/>
            <person name="Shigeta K."/>
            <person name="Senba T."/>
            <person name="Matsumura K."/>
            <person name="Nakajima Y."/>
            <person name="Mizuno T."/>
            <person name="Morinaga M."/>
            <person name="Sasaki M."/>
            <person name="Togashi T."/>
            <person name="Oyama M."/>
            <person name="Hata H."/>
            <person name="Watanabe M."/>
            <person name="Komatsu T."/>
            <person name="Mizushima-Sugano J."/>
            <person name="Satoh T."/>
            <person name="Shirai Y."/>
            <person name="Takahashi Y."/>
            <person name="Nakagawa K."/>
            <person name="Okumura K."/>
            <person name="Nagase T."/>
            <person name="Nomura N."/>
            <person name="Kikuchi H."/>
            <person name="Masuho Y."/>
            <person name="Yamashita R."/>
            <person name="Nakai K."/>
            <person name="Yada T."/>
            <person name="Nakamura Y."/>
            <person name="Ohara O."/>
            <person name="Isogai T."/>
            <person name="Sugano S."/>
        </authorList>
    </citation>
    <scope>NUCLEOTIDE SEQUENCE [LARGE SCALE MRNA]</scope>
    <source>
        <tissue>Trachea</tissue>
    </source>
</reference>
<reference key="3">
    <citation type="submission" date="2005-09" db="EMBL/GenBank/DDBJ databases">
        <authorList>
            <person name="Mural R.J."/>
            <person name="Istrail S."/>
            <person name="Sutton G.G."/>
            <person name="Florea L."/>
            <person name="Halpern A.L."/>
            <person name="Mobarry C.M."/>
            <person name="Lippert R."/>
            <person name="Walenz B."/>
            <person name="Shatkay H."/>
            <person name="Dew I."/>
            <person name="Miller J.R."/>
            <person name="Flanigan M.J."/>
            <person name="Edwards N.J."/>
            <person name="Bolanos R."/>
            <person name="Fasulo D."/>
            <person name="Halldorsson B.V."/>
            <person name="Hannenhalli S."/>
            <person name="Turner R."/>
            <person name="Yooseph S."/>
            <person name="Lu F."/>
            <person name="Nusskern D.R."/>
            <person name="Shue B.C."/>
            <person name="Zheng X.H."/>
            <person name="Zhong F."/>
            <person name="Delcher A.L."/>
            <person name="Huson D.H."/>
            <person name="Kravitz S.A."/>
            <person name="Mouchard L."/>
            <person name="Reinert K."/>
            <person name="Remington K.A."/>
            <person name="Clark A.G."/>
            <person name="Waterman M.S."/>
            <person name="Eichler E.E."/>
            <person name="Adams M.D."/>
            <person name="Hunkapiller M.W."/>
            <person name="Myers E.W."/>
            <person name="Venter J.C."/>
        </authorList>
    </citation>
    <scope>NUCLEOTIDE SEQUENCE [LARGE SCALE GENOMIC DNA]</scope>
</reference>
<reference key="4">
    <citation type="journal article" date="2004" name="Genome Res.">
        <title>The status, quality, and expansion of the NIH full-length cDNA project: the Mammalian Gene Collection (MGC).</title>
        <authorList>
            <consortium name="The MGC Project Team"/>
        </authorList>
    </citation>
    <scope>NUCLEOTIDE SEQUENCE [LARGE SCALE MRNA]</scope>
</reference>
<reference key="5">
    <citation type="journal article" date="2008" name="Proc. Natl. Acad. Sci. U.S.A.">
        <title>A quantitative atlas of mitotic phosphorylation.</title>
        <authorList>
            <person name="Dephoure N."/>
            <person name="Zhou C."/>
            <person name="Villen J."/>
            <person name="Beausoleil S.A."/>
            <person name="Bakalarski C.E."/>
            <person name="Elledge S.J."/>
            <person name="Gygi S.P."/>
        </authorList>
    </citation>
    <scope>IDENTIFICATION BY MASS SPECTROMETRY [LARGE SCALE ANALYSIS]</scope>
    <source>
        <tissue>Cervix carcinoma</tissue>
    </source>
</reference>
<reference key="6">
    <citation type="journal article" date="2011" name="Sci. Signal.">
        <title>System-wide temporal characterization of the proteome and phosphoproteome of human embryonic stem cell differentiation.</title>
        <authorList>
            <person name="Rigbolt K.T."/>
            <person name="Prokhorova T.A."/>
            <person name="Akimov V."/>
            <person name="Henningsen J."/>
            <person name="Johansen P.T."/>
            <person name="Kratchmarova I."/>
            <person name="Kassem M."/>
            <person name="Mann M."/>
            <person name="Olsen J.V."/>
            <person name="Blagoev B."/>
        </authorList>
    </citation>
    <scope>PHOSPHORYLATION [LARGE SCALE ANALYSIS] AT SER-1050</scope>
    <scope>IDENTIFICATION BY MASS SPECTROMETRY [LARGE SCALE ANALYSIS]</scope>
</reference>
<reference key="7">
    <citation type="journal article" date="2017" name="Nat. Struct. Mol. Biol.">
        <title>Site-specific mapping of the human SUMO proteome reveals co-modification with phosphorylation.</title>
        <authorList>
            <person name="Hendriks I.A."/>
            <person name="Lyon D."/>
            <person name="Young C."/>
            <person name="Jensen L.J."/>
            <person name="Vertegaal A.C."/>
            <person name="Nielsen M.L."/>
        </authorList>
    </citation>
    <scope>SUMOYLATION [LARGE SCALE ANALYSIS] AT LYS-1043</scope>
    <scope>IDENTIFICATION BY MASS SPECTROMETRY [LARGE SCALE ANALYSIS]</scope>
</reference>
<reference key="8">
    <citation type="journal article" date="2018" name="Mol. Psychiatry">
        <title>Mapping autosomal recessive intellectual disability: combined microarray and exome sequencing identifies 26 novel candidate genes in 192 consanguineous families.</title>
        <authorList>
            <person name="Harripaul R."/>
            <person name="Vasli N."/>
            <person name="Mikhailov A."/>
            <person name="Rafiq M.A."/>
            <person name="Mittal K."/>
            <person name="Windpassinger C."/>
            <person name="Sheikh T.I."/>
            <person name="Noor A."/>
            <person name="Mahmood H."/>
            <person name="Downey S."/>
            <person name="Johnson M."/>
            <person name="Vleuten K."/>
            <person name="Bell L."/>
            <person name="Ilyas M."/>
            <person name="Khan F.S."/>
            <person name="Khan V."/>
            <person name="Moradi M."/>
            <person name="Ayaz M."/>
            <person name="Naeem F."/>
            <person name="Heidari A."/>
            <person name="Ahmed I."/>
            <person name="Ghadami S."/>
            <person name="Agha Z."/>
            <person name="Zeinali S."/>
            <person name="Qamar R."/>
            <person name="Mozhdehipanah H."/>
            <person name="John P."/>
            <person name="Mir A."/>
            <person name="Ansar M."/>
            <person name="French L."/>
            <person name="Ayub M."/>
            <person name="Vincent J.B."/>
        </authorList>
    </citation>
    <scope>VARIANT NEDMCB GLN-880</scope>
</reference>
<reference key="9">
    <citation type="journal article" date="2018" name="Hum. Mol. Genet.">
        <title>Biallelic missense variants in ZBTB11 can cause intellectual disability in humans.</title>
        <authorList>
            <person name="Fattahi Z."/>
            <person name="Sheikh T.I."/>
            <person name="Musante L."/>
            <person name="Rasheed M."/>
            <person name="Taskiran I.I."/>
            <person name="Harripaul R."/>
            <person name="Hu H."/>
            <person name="Kazeminasab S."/>
            <person name="Alam M.R."/>
            <person name="Hosseini M."/>
            <person name="Larti F."/>
            <person name="Ghaderi Z."/>
            <person name="Celik A."/>
            <person name="Ayub M."/>
            <person name="Ansar M."/>
            <person name="Haddadi M."/>
            <person name="Wienker T.F."/>
            <person name="Ropers H.H."/>
            <person name="Kahrizi K."/>
            <person name="Vincent J.B."/>
            <person name="Najmabadi H."/>
        </authorList>
    </citation>
    <scope>VARIANTS NEDMCB TYR-729 AND GLN-880</scope>
    <scope>SUBCELLULAR LOCATION</scope>
    <scope>CHARACTERIZATION OF VARIANTS NEDMCB TYR-729 AND GLN-880</scope>
</reference>
<comment type="function">
    <text evidence="7">May be involved in transcriptional regulation.</text>
</comment>
<comment type="subcellular location">
    <subcellularLocation>
        <location evidence="5">Nucleus</location>
        <location evidence="5">Nucleolus</location>
    </subcellularLocation>
</comment>
<comment type="disease" evidence="4 5">
    <disease id="DI-05523">
        <name>Neurodevelopmental disorder with progressive movement abnormalities, cognitive decline, and brain abnormalities</name>
        <acronym>NEDMCB</acronym>
        <description>An autosomal recessive disorder characterized by global developmental delay, developmental regression, variably impaired intellectual development with poor or absent speech, difficulty walking or inability to walk, and various movement abnormalities, including spasticity, hypertonia, dystonia, tremor, and myoclonus. Affected individuals usually show poor overall growth, often with microcephaly, hypotonia, limb contractures, and cataracts.</description>
        <dbReference type="MIM" id="618383"/>
    </disease>
    <text>The disease is caused by variants affecting the gene represented in this entry.</text>
</comment>
<accession>O95625</accession>
<accession>Q2NKP9</accession>
<protein>
    <recommendedName>
        <fullName evidence="7">Zinc finger and BTB domain-containing protein 11</fullName>
    </recommendedName>
</protein>
<feature type="chain" id="PRO_0000047727" description="Zinc finger and BTB domain-containing protein 11">
    <location>
        <begin position="1"/>
        <end position="1053"/>
    </location>
</feature>
<feature type="domain" description="BTB" evidence="1">
    <location>
        <begin position="214"/>
        <end position="282"/>
    </location>
</feature>
<feature type="zinc finger region" description="C2H2-type 1" evidence="2">
    <location>
        <begin position="569"/>
        <end position="591"/>
    </location>
</feature>
<feature type="zinc finger region" description="C2H2-type 2" evidence="2">
    <location>
        <begin position="597"/>
        <end position="619"/>
    </location>
</feature>
<feature type="zinc finger region" description="C2H2-type 3" evidence="2">
    <location>
        <begin position="651"/>
        <end position="673"/>
    </location>
</feature>
<feature type="zinc finger region" description="C2H2-type 4" evidence="2">
    <location>
        <begin position="679"/>
        <end position="701"/>
    </location>
</feature>
<feature type="zinc finger region" description="C2H2-type 5" evidence="2">
    <location>
        <begin position="707"/>
        <end position="729"/>
    </location>
</feature>
<feature type="zinc finger region" description="C2H2-type 6" evidence="2">
    <location>
        <begin position="735"/>
        <end position="757"/>
    </location>
</feature>
<feature type="zinc finger region" description="C2H2-type 7" evidence="2">
    <location>
        <begin position="766"/>
        <end position="788"/>
    </location>
</feature>
<feature type="zinc finger region" description="C2H2-type 8" evidence="2">
    <location>
        <begin position="794"/>
        <end position="816"/>
    </location>
</feature>
<feature type="zinc finger region" description="C2H2-type 9" evidence="2">
    <location>
        <begin position="822"/>
        <end position="846"/>
    </location>
</feature>
<feature type="zinc finger region" description="C2H2-type 10" evidence="2">
    <location>
        <begin position="858"/>
        <end position="880"/>
    </location>
</feature>
<feature type="zinc finger region" description="C2H2-type 11" evidence="2">
    <location>
        <begin position="886"/>
        <end position="908"/>
    </location>
</feature>
<feature type="zinc finger region" description="C2H2-type 12" evidence="2">
    <location>
        <begin position="914"/>
        <end position="937"/>
    </location>
</feature>
<feature type="region of interest" description="Disordered" evidence="3">
    <location>
        <begin position="141"/>
        <end position="173"/>
    </location>
</feature>
<feature type="region of interest" description="Disordered" evidence="3">
    <location>
        <begin position="546"/>
        <end position="566"/>
    </location>
</feature>
<feature type="region of interest" description="Disordered" evidence="3">
    <location>
        <begin position="619"/>
        <end position="643"/>
    </location>
</feature>
<feature type="compositionally biased region" description="Acidic residues" evidence="3">
    <location>
        <begin position="141"/>
        <end position="156"/>
    </location>
</feature>
<feature type="compositionally biased region" description="Low complexity" evidence="3">
    <location>
        <begin position="157"/>
        <end position="168"/>
    </location>
</feature>
<feature type="compositionally biased region" description="Basic and acidic residues" evidence="3">
    <location>
        <begin position="556"/>
        <end position="566"/>
    </location>
</feature>
<feature type="compositionally biased region" description="Low complexity" evidence="3">
    <location>
        <begin position="626"/>
        <end position="642"/>
    </location>
</feature>
<feature type="modified residue" description="Phosphoserine" evidence="9">
    <location>
        <position position="1050"/>
    </location>
</feature>
<feature type="cross-link" description="Glycyl lysine isopeptide (Lys-Gly) (interchain with G-Cter in SUMO2)" evidence="10">
    <location>
        <position position="1043"/>
    </location>
</feature>
<feature type="sequence variant" id="VAR_021894" description="In dbSNP:rs3749323.">
    <original>G</original>
    <variation>S</variation>
    <location>
        <position position="44"/>
    </location>
</feature>
<feature type="sequence variant" id="VAR_047465" description="In dbSNP:rs33957144.">
    <original>T</original>
    <variation>N</variation>
    <location>
        <position position="350"/>
    </location>
</feature>
<feature type="sequence variant" id="VAR_082098" description="In NEDMCB; impaired localization to the nucleolus; dbSNP:rs1559982532." evidence="5">
    <original>H</original>
    <variation>Y</variation>
    <location>
        <position position="729"/>
    </location>
</feature>
<feature type="sequence variant" id="VAR_080760" description="In NEDMCB; impaired localization to the nucleolus; dbSNP:rs1559981249." evidence="4 5">
    <original>H</original>
    <variation>Q</variation>
    <location>
        <position position="880"/>
    </location>
</feature>
<feature type="sequence conflict" description="In Ref. 1; AAD00172." evidence="7" ref="1">
    <original>D</original>
    <variation>N</variation>
    <location>
        <position position="495"/>
    </location>
</feature>
<keyword id="KW-0225">Disease variant</keyword>
<keyword id="KW-0238">DNA-binding</keyword>
<keyword id="KW-0991">Intellectual disability</keyword>
<keyword id="KW-1017">Isopeptide bond</keyword>
<keyword id="KW-0479">Metal-binding</keyword>
<keyword id="KW-0539">Nucleus</keyword>
<keyword id="KW-0597">Phosphoprotein</keyword>
<keyword id="KW-1267">Proteomics identification</keyword>
<keyword id="KW-1185">Reference proteome</keyword>
<keyword id="KW-0677">Repeat</keyword>
<keyword id="KW-0804">Transcription</keyword>
<keyword id="KW-0805">Transcription regulation</keyword>
<keyword id="KW-0832">Ubl conjugation</keyword>
<keyword id="KW-0862">Zinc</keyword>
<keyword id="KW-0863">Zinc-finger</keyword>
<sequence length="1053" mass="119384">MSSEESYRAILRYLTNEREPYAPGTEGNVKRKIRKAAACYVVRGGTLYYQRRQRHRKTFAELEVVLQPERRRDLIEAAHLGPGGTHHTRHQTWHYLSKTYWWRGILKQVKDYIKQCSKCQEKLDRSRPISDVSEMLEELGLDLESGEESNESEDDLSNFTSSPTTASKPAKKKPVSKHELVFVDTKGVVKRSSPKHCQAVLKQLNEQRLSNQFCDVTLLIEGEEYKAHKSVLSANSEYFRDLFIEKGAVSSHEAVVDLSGFCKASFLPLLEFAYTSVLSFDFCSMADVAILARHLFMSEVLEICESVHKLMEEKQLTVYKKGEVQTVASTQDLRVQNGGTAPPVASSEGTTTSLPTELGDCEIVLLVNGELPEAEQNGEVGRQPEPQVSSEAESALSSVGCIADSHPEMESVDLITKNNQTELETSNNRENNTVSNIHPKLSKENVISSSPEDSGMGNDISAEDICAEDIPKHRQKVDQPLKDQENLVASTAKTDFGPDDDTYRSRLRQRSVNEGAYIRLHKGMEKKLQKRKAVPKSAVQQVAQKLVQRGKKMKQPKRDAKENTEEASHKCGECGMVFQRRYALIMHKLKHERARDYKCPLCKKQFQYSASLRAHLIRHTRKDAPSSSSSNSTSNEASGTSSEKGRTKREFICSICGRTLPKLYSLRIHMLKHTGVKPHACQVCGKTFIYKHGLKLHQSLHQSQKQFQCELCVKSFVTKRSLQEHMSIHTGESKYLCSVCGKSFHRGSGLSKHFKKHQPKPEVRGYHCTQCEKSFFEARDLRQHMNKHLGVKPFQCQFCDKCYSWKKDWYSHVKSHSVTEPYRCNICGKEFYEKALFRRHVKKATHGKKGRAKQNLERVCEKCGRKFTQLREYRRHMNNHEGVKPFECLTCGVAWADARSLKRHVRTHTGERPYVCPVCSEAYIDARTLRKHMTKFHRDYVPCKIMLEKDTLQFHNQGTQVAHAVSILTAGMQEQESSGPQELETVVVTGETMEALEAVAATEEYPSVSTLSDQSIMQVVNYVLAQQQGQKLSEVAEAIQTVKVEVAHISGGE</sequence>
<organism>
    <name type="scientific">Homo sapiens</name>
    <name type="common">Human</name>
    <dbReference type="NCBI Taxonomy" id="9606"/>
    <lineage>
        <taxon>Eukaryota</taxon>
        <taxon>Metazoa</taxon>
        <taxon>Chordata</taxon>
        <taxon>Craniata</taxon>
        <taxon>Vertebrata</taxon>
        <taxon>Euteleostomi</taxon>
        <taxon>Mammalia</taxon>
        <taxon>Eutheria</taxon>
        <taxon>Euarchontoglires</taxon>
        <taxon>Primates</taxon>
        <taxon>Haplorrhini</taxon>
        <taxon>Catarrhini</taxon>
        <taxon>Hominidae</taxon>
        <taxon>Homo</taxon>
    </lineage>
</organism>
<dbReference type="EMBL" id="U69274">
    <property type="protein sequence ID" value="AAD00172.1"/>
    <property type="molecule type" value="mRNA"/>
</dbReference>
<dbReference type="EMBL" id="AK312859">
    <property type="protein sequence ID" value="BAG35711.1"/>
    <property type="molecule type" value="mRNA"/>
</dbReference>
<dbReference type="EMBL" id="CH471052">
    <property type="protein sequence ID" value="EAW79786.1"/>
    <property type="molecule type" value="Genomic_DNA"/>
</dbReference>
<dbReference type="EMBL" id="BC111700">
    <property type="protein sequence ID" value="AAI11701.1"/>
    <property type="molecule type" value="mRNA"/>
</dbReference>
<dbReference type="CCDS" id="CCDS2943.1"/>
<dbReference type="RefSeq" id="NP_055230.2">
    <property type="nucleotide sequence ID" value="NM_014415.4"/>
</dbReference>
<dbReference type="SMR" id="O95625"/>
<dbReference type="BioGRID" id="118005">
    <property type="interactions" value="131"/>
</dbReference>
<dbReference type="FunCoup" id="O95625">
    <property type="interactions" value="3108"/>
</dbReference>
<dbReference type="IntAct" id="O95625">
    <property type="interactions" value="97"/>
</dbReference>
<dbReference type="MINT" id="O95625"/>
<dbReference type="STRING" id="9606.ENSP00000326200"/>
<dbReference type="ChEMBL" id="CHEMBL5069363"/>
<dbReference type="GlyGen" id="O95625">
    <property type="glycosylation" value="5 sites, 2 N-linked glycans (2 sites), 1 O-linked glycan (3 sites)"/>
</dbReference>
<dbReference type="iPTMnet" id="O95625"/>
<dbReference type="PhosphoSitePlus" id="O95625"/>
<dbReference type="BioMuta" id="ZBTB11"/>
<dbReference type="jPOST" id="O95625"/>
<dbReference type="MassIVE" id="O95625"/>
<dbReference type="PaxDb" id="9606-ENSP00000326200"/>
<dbReference type="PeptideAtlas" id="O95625"/>
<dbReference type="ProteomicsDB" id="50956"/>
<dbReference type="Pumba" id="O95625"/>
<dbReference type="Antibodypedia" id="15941">
    <property type="antibodies" value="124 antibodies from 23 providers"/>
</dbReference>
<dbReference type="DNASU" id="27107"/>
<dbReference type="Ensembl" id="ENST00000312938.5">
    <property type="protein sequence ID" value="ENSP00000326200.4"/>
    <property type="gene ID" value="ENSG00000066422.7"/>
</dbReference>
<dbReference type="GeneID" id="27107"/>
<dbReference type="KEGG" id="hsa:27107"/>
<dbReference type="MANE-Select" id="ENST00000312938.5">
    <property type="protein sequence ID" value="ENSP00000326200.4"/>
    <property type="RefSeq nucleotide sequence ID" value="NM_014415.4"/>
    <property type="RefSeq protein sequence ID" value="NP_055230.2"/>
</dbReference>
<dbReference type="UCSC" id="uc003dve.5">
    <property type="organism name" value="human"/>
</dbReference>
<dbReference type="AGR" id="HGNC:16740"/>
<dbReference type="CTD" id="27107"/>
<dbReference type="DisGeNET" id="27107"/>
<dbReference type="GeneCards" id="ZBTB11"/>
<dbReference type="HGNC" id="HGNC:16740">
    <property type="gene designation" value="ZBTB11"/>
</dbReference>
<dbReference type="HPA" id="ENSG00000066422">
    <property type="expression patterns" value="Low tissue specificity"/>
</dbReference>
<dbReference type="MalaCards" id="ZBTB11"/>
<dbReference type="MIM" id="618181">
    <property type="type" value="gene"/>
</dbReference>
<dbReference type="MIM" id="618383">
    <property type="type" value="phenotype"/>
</dbReference>
<dbReference type="neXtProt" id="NX_O95625"/>
<dbReference type="OpenTargets" id="ENSG00000066422"/>
<dbReference type="PharmGKB" id="PA134907354"/>
<dbReference type="VEuPathDB" id="HostDB:ENSG00000066422"/>
<dbReference type="eggNOG" id="KOG1721">
    <property type="taxonomic scope" value="Eukaryota"/>
</dbReference>
<dbReference type="GeneTree" id="ENSGT00900000141090"/>
<dbReference type="HOGENOM" id="CLU_010706_0_0_1"/>
<dbReference type="InParanoid" id="O95625"/>
<dbReference type="OMA" id="RYAFIMH"/>
<dbReference type="OrthoDB" id="6077919at2759"/>
<dbReference type="PAN-GO" id="O95625">
    <property type="GO annotations" value="3 GO annotations based on evolutionary models"/>
</dbReference>
<dbReference type="PhylomeDB" id="O95625"/>
<dbReference type="TreeFam" id="TF332263"/>
<dbReference type="PathwayCommons" id="O95625"/>
<dbReference type="SignaLink" id="O95625"/>
<dbReference type="BioGRID-ORCS" id="27107">
    <property type="hits" value="667 hits in 1231 CRISPR screens"/>
</dbReference>
<dbReference type="GeneWiki" id="ZBTB11"/>
<dbReference type="GenomeRNAi" id="27107"/>
<dbReference type="Pharos" id="O95625">
    <property type="development level" value="Tbio"/>
</dbReference>
<dbReference type="PRO" id="PR:O95625"/>
<dbReference type="Proteomes" id="UP000005640">
    <property type="component" value="Chromosome 3"/>
</dbReference>
<dbReference type="RNAct" id="O95625">
    <property type="molecule type" value="protein"/>
</dbReference>
<dbReference type="Bgee" id="ENSG00000066422">
    <property type="expression patterns" value="Expressed in sperm and 213 other cell types or tissues"/>
</dbReference>
<dbReference type="ExpressionAtlas" id="O95625">
    <property type="expression patterns" value="baseline and differential"/>
</dbReference>
<dbReference type="GO" id="GO:0005730">
    <property type="term" value="C:nucleolus"/>
    <property type="evidence" value="ECO:0007669"/>
    <property type="project" value="UniProtKB-SubCell"/>
</dbReference>
<dbReference type="GO" id="GO:0005654">
    <property type="term" value="C:nucleoplasm"/>
    <property type="evidence" value="ECO:0000314"/>
    <property type="project" value="HPA"/>
</dbReference>
<dbReference type="GO" id="GO:0000981">
    <property type="term" value="F:DNA-binding transcription factor activity, RNA polymerase II-specific"/>
    <property type="evidence" value="ECO:0000318"/>
    <property type="project" value="GO_Central"/>
</dbReference>
<dbReference type="GO" id="GO:0000978">
    <property type="term" value="F:RNA polymerase II cis-regulatory region sequence-specific DNA binding"/>
    <property type="evidence" value="ECO:0000318"/>
    <property type="project" value="GO_Central"/>
</dbReference>
<dbReference type="GO" id="GO:0008270">
    <property type="term" value="F:zinc ion binding"/>
    <property type="evidence" value="ECO:0007669"/>
    <property type="project" value="UniProtKB-KW"/>
</dbReference>
<dbReference type="GO" id="GO:0006355">
    <property type="term" value="P:regulation of DNA-templated transcription"/>
    <property type="evidence" value="ECO:0000318"/>
    <property type="project" value="GO_Central"/>
</dbReference>
<dbReference type="CDD" id="cd18202">
    <property type="entry name" value="BTB_POZ_ZBTB11"/>
    <property type="match status" value="1"/>
</dbReference>
<dbReference type="FunFam" id="3.30.160.60:FF:000633">
    <property type="entry name" value="Zinc finger and BTB domain containing 11"/>
    <property type="match status" value="1"/>
</dbReference>
<dbReference type="FunFam" id="3.30.160.60:FF:001553">
    <property type="entry name" value="Zinc finger and BTB domain containing 11"/>
    <property type="match status" value="1"/>
</dbReference>
<dbReference type="FunFam" id="1.10.340.70:FF:000002">
    <property type="entry name" value="Zinc finger and BTB domain-containing protein 11"/>
    <property type="match status" value="1"/>
</dbReference>
<dbReference type="FunFam" id="3.30.160.60:FF:000971">
    <property type="entry name" value="Zinc finger and BTB domain-containing protein 11"/>
    <property type="match status" value="1"/>
</dbReference>
<dbReference type="FunFam" id="3.30.160.60:FF:000997">
    <property type="entry name" value="Zinc finger and BTB domain-containing protein 11"/>
    <property type="match status" value="1"/>
</dbReference>
<dbReference type="FunFam" id="3.30.160.60:FF:001072">
    <property type="entry name" value="zinc finger and BTB domain-containing protein 11"/>
    <property type="match status" value="1"/>
</dbReference>
<dbReference type="FunFam" id="3.30.160.60:FF:001086">
    <property type="entry name" value="zinc finger and BTB domain-containing protein 11"/>
    <property type="match status" value="1"/>
</dbReference>
<dbReference type="FunFam" id="3.30.710.10:FF:000070">
    <property type="entry name" value="zinc finger and BTB domain-containing protein 11"/>
    <property type="match status" value="1"/>
</dbReference>
<dbReference type="Gene3D" id="1.10.340.70">
    <property type="match status" value="1"/>
</dbReference>
<dbReference type="Gene3D" id="3.30.160.60">
    <property type="entry name" value="Classic Zinc Finger"/>
    <property type="match status" value="10"/>
</dbReference>
<dbReference type="Gene3D" id="3.30.710.10">
    <property type="entry name" value="Potassium Channel Kv1.1, Chain A"/>
    <property type="match status" value="1"/>
</dbReference>
<dbReference type="InterPro" id="IPR000210">
    <property type="entry name" value="BTB/POZ_dom"/>
</dbReference>
<dbReference type="InterPro" id="IPR041588">
    <property type="entry name" value="Integrase_H2C2"/>
</dbReference>
<dbReference type="InterPro" id="IPR011333">
    <property type="entry name" value="SKP1/BTB/POZ_sf"/>
</dbReference>
<dbReference type="InterPro" id="IPR048060">
    <property type="entry name" value="ZBTB11_BTB_POZ"/>
</dbReference>
<dbReference type="InterPro" id="IPR036236">
    <property type="entry name" value="Znf_C2H2_sf"/>
</dbReference>
<dbReference type="InterPro" id="IPR013087">
    <property type="entry name" value="Znf_C2H2_type"/>
</dbReference>
<dbReference type="PANTHER" id="PTHR24394:SF41">
    <property type="entry name" value="ZINC FINGER AND BTB DOMAIN CONTAINING 11"/>
    <property type="match status" value="1"/>
</dbReference>
<dbReference type="PANTHER" id="PTHR24394">
    <property type="entry name" value="ZINC FINGER PROTEIN"/>
    <property type="match status" value="1"/>
</dbReference>
<dbReference type="Pfam" id="PF00651">
    <property type="entry name" value="BTB"/>
    <property type="match status" value="1"/>
</dbReference>
<dbReference type="Pfam" id="PF17921">
    <property type="entry name" value="Integrase_H2C2"/>
    <property type="match status" value="1"/>
</dbReference>
<dbReference type="Pfam" id="PF00096">
    <property type="entry name" value="zf-C2H2"/>
    <property type="match status" value="6"/>
</dbReference>
<dbReference type="Pfam" id="PF13912">
    <property type="entry name" value="zf-C2H2_6"/>
    <property type="match status" value="4"/>
</dbReference>
<dbReference type="SMART" id="SM00225">
    <property type="entry name" value="BTB"/>
    <property type="match status" value="1"/>
</dbReference>
<dbReference type="SMART" id="SM00355">
    <property type="entry name" value="ZnF_C2H2"/>
    <property type="match status" value="12"/>
</dbReference>
<dbReference type="SUPFAM" id="SSF57667">
    <property type="entry name" value="beta-beta-alpha zinc fingers"/>
    <property type="match status" value="6"/>
</dbReference>
<dbReference type="SUPFAM" id="SSF54695">
    <property type="entry name" value="POZ domain"/>
    <property type="match status" value="1"/>
</dbReference>
<dbReference type="PROSITE" id="PS50097">
    <property type="entry name" value="BTB"/>
    <property type="match status" value="1"/>
</dbReference>
<dbReference type="PROSITE" id="PS00028">
    <property type="entry name" value="ZINC_FINGER_C2H2_1"/>
    <property type="match status" value="12"/>
</dbReference>
<dbReference type="PROSITE" id="PS50157">
    <property type="entry name" value="ZINC_FINGER_C2H2_2"/>
    <property type="match status" value="12"/>
</dbReference>
<proteinExistence type="evidence at protein level"/>
<evidence type="ECO:0000255" key="1">
    <source>
        <dbReference type="PROSITE-ProRule" id="PRU00037"/>
    </source>
</evidence>
<evidence type="ECO:0000255" key="2">
    <source>
        <dbReference type="PROSITE-ProRule" id="PRU00042"/>
    </source>
</evidence>
<evidence type="ECO:0000256" key="3">
    <source>
        <dbReference type="SAM" id="MobiDB-lite"/>
    </source>
</evidence>
<evidence type="ECO:0000269" key="4">
    <source>
    </source>
</evidence>
<evidence type="ECO:0000269" key="5">
    <source>
    </source>
</evidence>
<evidence type="ECO:0000303" key="6">
    <source>
    </source>
</evidence>
<evidence type="ECO:0000305" key="7"/>
<evidence type="ECO:0000312" key="8">
    <source>
        <dbReference type="HGNC" id="HGNC:16740"/>
    </source>
</evidence>
<evidence type="ECO:0007744" key="9">
    <source>
    </source>
</evidence>
<evidence type="ECO:0007744" key="10">
    <source>
    </source>
</evidence>